<name>MURC_HYDS0</name>
<gene>
    <name evidence="1" type="primary">murC</name>
    <name type="ordered locus">HY04AAS1_0587</name>
</gene>
<sequence>MFREKFRKFHFIGIGGIGMSGIAKILLDMGYEVSGSDVRQNDVIKELKEKGATIYIGHDAKNVIGKEVVVYSSAISNVNEELLKAKELGLQVISRGDMLADLFRMKEGIAISGSHGKTTTTSMISHISHIAGLDPTVLIGGILQTFGSNAVLGKSELLISEADESDGSFLKLNSVINVVTNIDKEHIGYYKDYEDIKEAFVKFINNVPFYGASVVNIDDTGVRSILSKIHKKIITYGIESGDFQAKNIVFNSDNTRFDVFYKGIKLNTIELQIPGIHNVYNALASIAVSTLMEIEQPVIRDALKSFKNAKRRIEFVGEKNTNLIYDDYGHHPTEIKSVYEALKSKYKDKNIVVVFQPHRYSRTYYLIDDFVDLFKSLDKVFLLDIYGASEENTFGISSLDMINKVSKEECVYIPSKEELFDRLDELKDSVIVFMGAGSIGQWSHEYAKT</sequence>
<evidence type="ECO:0000255" key="1">
    <source>
        <dbReference type="HAMAP-Rule" id="MF_00046"/>
    </source>
</evidence>
<comment type="function">
    <text evidence="1">Cell wall formation.</text>
</comment>
<comment type="catalytic activity">
    <reaction evidence="1">
        <text>UDP-N-acetyl-alpha-D-muramate + L-alanine + ATP = UDP-N-acetyl-alpha-D-muramoyl-L-alanine + ADP + phosphate + H(+)</text>
        <dbReference type="Rhea" id="RHEA:23372"/>
        <dbReference type="ChEBI" id="CHEBI:15378"/>
        <dbReference type="ChEBI" id="CHEBI:30616"/>
        <dbReference type="ChEBI" id="CHEBI:43474"/>
        <dbReference type="ChEBI" id="CHEBI:57972"/>
        <dbReference type="ChEBI" id="CHEBI:70757"/>
        <dbReference type="ChEBI" id="CHEBI:83898"/>
        <dbReference type="ChEBI" id="CHEBI:456216"/>
        <dbReference type="EC" id="6.3.2.8"/>
    </reaction>
</comment>
<comment type="pathway">
    <text evidence="1">Cell wall biogenesis; peptidoglycan biosynthesis.</text>
</comment>
<comment type="subcellular location">
    <subcellularLocation>
        <location evidence="1">Cytoplasm</location>
    </subcellularLocation>
</comment>
<comment type="similarity">
    <text evidence="1">Belongs to the MurCDEF family.</text>
</comment>
<accession>B4U813</accession>
<reference key="1">
    <citation type="journal article" date="2009" name="J. Bacteriol.">
        <title>Complete and draft genome sequences of six members of the Aquificales.</title>
        <authorList>
            <person name="Reysenbach A.-L."/>
            <person name="Hamamura N."/>
            <person name="Podar M."/>
            <person name="Griffiths E."/>
            <person name="Ferreira S."/>
            <person name="Hochstein R."/>
            <person name="Heidelberg J."/>
            <person name="Johnson J."/>
            <person name="Mead D."/>
            <person name="Pohorille A."/>
            <person name="Sarmiento M."/>
            <person name="Schweighofer K."/>
            <person name="Seshadri R."/>
            <person name="Voytek M.A."/>
        </authorList>
    </citation>
    <scope>NUCLEOTIDE SEQUENCE [LARGE SCALE GENOMIC DNA]</scope>
    <source>
        <strain>Y04AAS1</strain>
    </source>
</reference>
<organism>
    <name type="scientific">Hydrogenobaculum sp. (strain Y04AAS1)</name>
    <dbReference type="NCBI Taxonomy" id="380749"/>
    <lineage>
        <taxon>Bacteria</taxon>
        <taxon>Pseudomonadati</taxon>
        <taxon>Aquificota</taxon>
        <taxon>Aquificia</taxon>
        <taxon>Aquificales</taxon>
        <taxon>Aquificaceae</taxon>
        <taxon>Hydrogenobaculum</taxon>
    </lineage>
</organism>
<keyword id="KW-0067">ATP-binding</keyword>
<keyword id="KW-0131">Cell cycle</keyword>
<keyword id="KW-0132">Cell division</keyword>
<keyword id="KW-0133">Cell shape</keyword>
<keyword id="KW-0961">Cell wall biogenesis/degradation</keyword>
<keyword id="KW-0963">Cytoplasm</keyword>
<keyword id="KW-0436">Ligase</keyword>
<keyword id="KW-0547">Nucleotide-binding</keyword>
<keyword id="KW-0573">Peptidoglycan synthesis</keyword>
<feature type="chain" id="PRO_1000192095" description="UDP-N-acetylmuramate--L-alanine ligase">
    <location>
        <begin position="1"/>
        <end position="449"/>
    </location>
</feature>
<feature type="binding site" evidence="1">
    <location>
        <begin position="113"/>
        <end position="119"/>
    </location>
    <ligand>
        <name>ATP</name>
        <dbReference type="ChEBI" id="CHEBI:30616"/>
    </ligand>
</feature>
<dbReference type="EC" id="6.3.2.8" evidence="1"/>
<dbReference type="EMBL" id="CP001130">
    <property type="protein sequence ID" value="ACG57274.1"/>
    <property type="molecule type" value="Genomic_DNA"/>
</dbReference>
<dbReference type="RefSeq" id="WP_012513630.1">
    <property type="nucleotide sequence ID" value="NC_011126.1"/>
</dbReference>
<dbReference type="SMR" id="B4U813"/>
<dbReference type="STRING" id="380749.HY04AAS1_0587"/>
<dbReference type="KEGG" id="hya:HY04AAS1_0587"/>
<dbReference type="eggNOG" id="COG0773">
    <property type="taxonomic scope" value="Bacteria"/>
</dbReference>
<dbReference type="HOGENOM" id="CLU_028104_2_2_0"/>
<dbReference type="OrthoDB" id="9804126at2"/>
<dbReference type="UniPathway" id="UPA00219"/>
<dbReference type="GO" id="GO:0005737">
    <property type="term" value="C:cytoplasm"/>
    <property type="evidence" value="ECO:0007669"/>
    <property type="project" value="UniProtKB-SubCell"/>
</dbReference>
<dbReference type="GO" id="GO:0005524">
    <property type="term" value="F:ATP binding"/>
    <property type="evidence" value="ECO:0007669"/>
    <property type="project" value="UniProtKB-UniRule"/>
</dbReference>
<dbReference type="GO" id="GO:0008763">
    <property type="term" value="F:UDP-N-acetylmuramate-L-alanine ligase activity"/>
    <property type="evidence" value="ECO:0007669"/>
    <property type="project" value="UniProtKB-UniRule"/>
</dbReference>
<dbReference type="GO" id="GO:0051301">
    <property type="term" value="P:cell division"/>
    <property type="evidence" value="ECO:0007669"/>
    <property type="project" value="UniProtKB-KW"/>
</dbReference>
<dbReference type="GO" id="GO:0071555">
    <property type="term" value="P:cell wall organization"/>
    <property type="evidence" value="ECO:0007669"/>
    <property type="project" value="UniProtKB-KW"/>
</dbReference>
<dbReference type="GO" id="GO:0009252">
    <property type="term" value="P:peptidoglycan biosynthetic process"/>
    <property type="evidence" value="ECO:0007669"/>
    <property type="project" value="UniProtKB-UniRule"/>
</dbReference>
<dbReference type="GO" id="GO:0008360">
    <property type="term" value="P:regulation of cell shape"/>
    <property type="evidence" value="ECO:0007669"/>
    <property type="project" value="UniProtKB-KW"/>
</dbReference>
<dbReference type="Gene3D" id="3.90.190.20">
    <property type="entry name" value="Mur ligase, C-terminal domain"/>
    <property type="match status" value="1"/>
</dbReference>
<dbReference type="Gene3D" id="3.40.1190.10">
    <property type="entry name" value="Mur-like, catalytic domain"/>
    <property type="match status" value="1"/>
</dbReference>
<dbReference type="Gene3D" id="3.40.50.720">
    <property type="entry name" value="NAD(P)-binding Rossmann-like Domain"/>
    <property type="match status" value="1"/>
</dbReference>
<dbReference type="HAMAP" id="MF_00046">
    <property type="entry name" value="MurC"/>
    <property type="match status" value="1"/>
</dbReference>
<dbReference type="InterPro" id="IPR036565">
    <property type="entry name" value="Mur-like_cat_sf"/>
</dbReference>
<dbReference type="InterPro" id="IPR004101">
    <property type="entry name" value="Mur_ligase_C"/>
</dbReference>
<dbReference type="InterPro" id="IPR036615">
    <property type="entry name" value="Mur_ligase_C_dom_sf"/>
</dbReference>
<dbReference type="InterPro" id="IPR013221">
    <property type="entry name" value="Mur_ligase_cen"/>
</dbReference>
<dbReference type="InterPro" id="IPR000713">
    <property type="entry name" value="Mur_ligase_N"/>
</dbReference>
<dbReference type="InterPro" id="IPR050061">
    <property type="entry name" value="MurCDEF_pg_biosynth"/>
</dbReference>
<dbReference type="InterPro" id="IPR005758">
    <property type="entry name" value="UDP-N-AcMur_Ala_ligase_MurC"/>
</dbReference>
<dbReference type="NCBIfam" id="TIGR01082">
    <property type="entry name" value="murC"/>
    <property type="match status" value="1"/>
</dbReference>
<dbReference type="PANTHER" id="PTHR43445:SF3">
    <property type="entry name" value="UDP-N-ACETYLMURAMATE--L-ALANINE LIGASE"/>
    <property type="match status" value="1"/>
</dbReference>
<dbReference type="PANTHER" id="PTHR43445">
    <property type="entry name" value="UDP-N-ACETYLMURAMATE--L-ALANINE LIGASE-RELATED"/>
    <property type="match status" value="1"/>
</dbReference>
<dbReference type="Pfam" id="PF01225">
    <property type="entry name" value="Mur_ligase"/>
    <property type="match status" value="1"/>
</dbReference>
<dbReference type="Pfam" id="PF02875">
    <property type="entry name" value="Mur_ligase_C"/>
    <property type="match status" value="1"/>
</dbReference>
<dbReference type="Pfam" id="PF08245">
    <property type="entry name" value="Mur_ligase_M"/>
    <property type="match status" value="1"/>
</dbReference>
<dbReference type="SUPFAM" id="SSF51984">
    <property type="entry name" value="MurCD N-terminal domain"/>
    <property type="match status" value="1"/>
</dbReference>
<dbReference type="SUPFAM" id="SSF53623">
    <property type="entry name" value="MurD-like peptide ligases, catalytic domain"/>
    <property type="match status" value="1"/>
</dbReference>
<dbReference type="SUPFAM" id="SSF53244">
    <property type="entry name" value="MurD-like peptide ligases, peptide-binding domain"/>
    <property type="match status" value="1"/>
</dbReference>
<proteinExistence type="inferred from homology"/>
<protein>
    <recommendedName>
        <fullName evidence="1">UDP-N-acetylmuramate--L-alanine ligase</fullName>
        <ecNumber evidence="1">6.3.2.8</ecNumber>
    </recommendedName>
    <alternativeName>
        <fullName evidence="1">UDP-N-acetylmuramoyl-L-alanine synthetase</fullName>
    </alternativeName>
</protein>